<feature type="chain" id="PRO_1000096734" description="N-acetyl-gamma-glutamyl-phosphate reductase">
    <location>
        <begin position="1"/>
        <end position="334"/>
    </location>
</feature>
<feature type="active site" evidence="1">
    <location>
        <position position="142"/>
    </location>
</feature>
<gene>
    <name evidence="1" type="primary">argC</name>
    <name type="ordered locus">Ppha_1383</name>
</gene>
<reference key="1">
    <citation type="submission" date="2008-06" db="EMBL/GenBank/DDBJ databases">
        <title>Complete sequence of Pelodictyon phaeoclathratiforme BU-1.</title>
        <authorList>
            <consortium name="US DOE Joint Genome Institute"/>
            <person name="Lucas S."/>
            <person name="Copeland A."/>
            <person name="Lapidus A."/>
            <person name="Glavina del Rio T."/>
            <person name="Dalin E."/>
            <person name="Tice H."/>
            <person name="Bruce D."/>
            <person name="Goodwin L."/>
            <person name="Pitluck S."/>
            <person name="Schmutz J."/>
            <person name="Larimer F."/>
            <person name="Land M."/>
            <person name="Hauser L."/>
            <person name="Kyrpides N."/>
            <person name="Mikhailova N."/>
            <person name="Liu Z."/>
            <person name="Li T."/>
            <person name="Zhao F."/>
            <person name="Overmann J."/>
            <person name="Bryant D.A."/>
            <person name="Richardson P."/>
        </authorList>
    </citation>
    <scope>NUCLEOTIDE SEQUENCE [LARGE SCALE GENOMIC DNA]</scope>
    <source>
        <strain>DSM 5477 / BU-1</strain>
    </source>
</reference>
<organism>
    <name type="scientific">Pelodictyon phaeoclathratiforme (strain DSM 5477 / BU-1)</name>
    <dbReference type="NCBI Taxonomy" id="324925"/>
    <lineage>
        <taxon>Bacteria</taxon>
        <taxon>Pseudomonadati</taxon>
        <taxon>Chlorobiota</taxon>
        <taxon>Chlorobiia</taxon>
        <taxon>Chlorobiales</taxon>
        <taxon>Chlorobiaceae</taxon>
        <taxon>Chlorobium/Pelodictyon group</taxon>
        <taxon>Pelodictyon</taxon>
    </lineage>
</organism>
<name>ARGC_PELPB</name>
<evidence type="ECO:0000255" key="1">
    <source>
        <dbReference type="HAMAP-Rule" id="MF_00150"/>
    </source>
</evidence>
<proteinExistence type="inferred from homology"/>
<accession>B4S9V0</accession>
<dbReference type="EC" id="1.2.1.38" evidence="1"/>
<dbReference type="EMBL" id="CP001110">
    <property type="protein sequence ID" value="ACF43646.1"/>
    <property type="molecule type" value="Genomic_DNA"/>
</dbReference>
<dbReference type="RefSeq" id="WP_012508137.1">
    <property type="nucleotide sequence ID" value="NC_011060.1"/>
</dbReference>
<dbReference type="SMR" id="B4S9V0"/>
<dbReference type="STRING" id="324925.Ppha_1383"/>
<dbReference type="KEGG" id="pph:Ppha_1383"/>
<dbReference type="eggNOG" id="COG0002">
    <property type="taxonomic scope" value="Bacteria"/>
</dbReference>
<dbReference type="HOGENOM" id="CLU_006384_0_1_10"/>
<dbReference type="OrthoDB" id="9801289at2"/>
<dbReference type="UniPathway" id="UPA00068">
    <property type="reaction ID" value="UER00108"/>
</dbReference>
<dbReference type="Proteomes" id="UP000002724">
    <property type="component" value="Chromosome"/>
</dbReference>
<dbReference type="GO" id="GO:0005737">
    <property type="term" value="C:cytoplasm"/>
    <property type="evidence" value="ECO:0007669"/>
    <property type="project" value="UniProtKB-SubCell"/>
</dbReference>
<dbReference type="GO" id="GO:0003942">
    <property type="term" value="F:N-acetyl-gamma-glutamyl-phosphate reductase activity"/>
    <property type="evidence" value="ECO:0007669"/>
    <property type="project" value="UniProtKB-UniRule"/>
</dbReference>
<dbReference type="GO" id="GO:0051287">
    <property type="term" value="F:NAD binding"/>
    <property type="evidence" value="ECO:0007669"/>
    <property type="project" value="InterPro"/>
</dbReference>
<dbReference type="GO" id="GO:0070401">
    <property type="term" value="F:NADP+ binding"/>
    <property type="evidence" value="ECO:0007669"/>
    <property type="project" value="InterPro"/>
</dbReference>
<dbReference type="GO" id="GO:0006526">
    <property type="term" value="P:L-arginine biosynthetic process"/>
    <property type="evidence" value="ECO:0007669"/>
    <property type="project" value="UniProtKB-UniRule"/>
</dbReference>
<dbReference type="CDD" id="cd23934">
    <property type="entry name" value="AGPR_1_C"/>
    <property type="match status" value="1"/>
</dbReference>
<dbReference type="CDD" id="cd17895">
    <property type="entry name" value="AGPR_1_N"/>
    <property type="match status" value="1"/>
</dbReference>
<dbReference type="Gene3D" id="3.30.360.10">
    <property type="entry name" value="Dihydrodipicolinate Reductase, domain 2"/>
    <property type="match status" value="1"/>
</dbReference>
<dbReference type="Gene3D" id="3.40.50.720">
    <property type="entry name" value="NAD(P)-binding Rossmann-like Domain"/>
    <property type="match status" value="1"/>
</dbReference>
<dbReference type="HAMAP" id="MF_00150">
    <property type="entry name" value="ArgC_type1"/>
    <property type="match status" value="1"/>
</dbReference>
<dbReference type="InterPro" id="IPR023013">
    <property type="entry name" value="AGPR_AS"/>
</dbReference>
<dbReference type="InterPro" id="IPR000706">
    <property type="entry name" value="AGPR_type-1"/>
</dbReference>
<dbReference type="InterPro" id="IPR036291">
    <property type="entry name" value="NAD(P)-bd_dom_sf"/>
</dbReference>
<dbReference type="InterPro" id="IPR050085">
    <property type="entry name" value="NAGSA_dehydrogenase"/>
</dbReference>
<dbReference type="InterPro" id="IPR000534">
    <property type="entry name" value="Semialdehyde_DH_NAD-bd"/>
</dbReference>
<dbReference type="NCBIfam" id="TIGR01850">
    <property type="entry name" value="argC"/>
    <property type="match status" value="1"/>
</dbReference>
<dbReference type="PANTHER" id="PTHR32338:SF10">
    <property type="entry name" value="N-ACETYL-GAMMA-GLUTAMYL-PHOSPHATE REDUCTASE, CHLOROPLASTIC-RELATED"/>
    <property type="match status" value="1"/>
</dbReference>
<dbReference type="PANTHER" id="PTHR32338">
    <property type="entry name" value="N-ACETYL-GAMMA-GLUTAMYL-PHOSPHATE REDUCTASE, CHLOROPLASTIC-RELATED-RELATED"/>
    <property type="match status" value="1"/>
</dbReference>
<dbReference type="Pfam" id="PF01118">
    <property type="entry name" value="Semialdhyde_dh"/>
    <property type="match status" value="1"/>
</dbReference>
<dbReference type="Pfam" id="PF22698">
    <property type="entry name" value="Semialdhyde_dhC_1"/>
    <property type="match status" value="1"/>
</dbReference>
<dbReference type="SMART" id="SM00859">
    <property type="entry name" value="Semialdhyde_dh"/>
    <property type="match status" value="1"/>
</dbReference>
<dbReference type="SUPFAM" id="SSF55347">
    <property type="entry name" value="Glyceraldehyde-3-phosphate dehydrogenase-like, C-terminal domain"/>
    <property type="match status" value="1"/>
</dbReference>
<dbReference type="SUPFAM" id="SSF51735">
    <property type="entry name" value="NAD(P)-binding Rossmann-fold domains"/>
    <property type="match status" value="1"/>
</dbReference>
<dbReference type="PROSITE" id="PS01224">
    <property type="entry name" value="ARGC"/>
    <property type="match status" value="1"/>
</dbReference>
<keyword id="KW-0028">Amino-acid biosynthesis</keyword>
<keyword id="KW-0055">Arginine biosynthesis</keyword>
<keyword id="KW-0963">Cytoplasm</keyword>
<keyword id="KW-0521">NADP</keyword>
<keyword id="KW-0560">Oxidoreductase</keyword>
<keyword id="KW-1185">Reference proteome</keyword>
<comment type="function">
    <text evidence="1">Catalyzes the NADPH-dependent reduction of N-acetyl-5-glutamyl phosphate to yield N-acetyl-L-glutamate 5-semialdehyde.</text>
</comment>
<comment type="catalytic activity">
    <reaction evidence="1">
        <text>N-acetyl-L-glutamate 5-semialdehyde + phosphate + NADP(+) = N-acetyl-L-glutamyl 5-phosphate + NADPH + H(+)</text>
        <dbReference type="Rhea" id="RHEA:21588"/>
        <dbReference type="ChEBI" id="CHEBI:15378"/>
        <dbReference type="ChEBI" id="CHEBI:29123"/>
        <dbReference type="ChEBI" id="CHEBI:43474"/>
        <dbReference type="ChEBI" id="CHEBI:57783"/>
        <dbReference type="ChEBI" id="CHEBI:57936"/>
        <dbReference type="ChEBI" id="CHEBI:58349"/>
        <dbReference type="EC" id="1.2.1.38"/>
    </reaction>
</comment>
<comment type="pathway">
    <text evidence="1">Amino-acid biosynthesis; L-arginine biosynthesis; N(2)-acetyl-L-ornithine from L-glutamate: step 3/4.</text>
</comment>
<comment type="subcellular location">
    <subcellularLocation>
        <location evidence="1">Cytoplasm</location>
    </subcellularLocation>
</comment>
<comment type="similarity">
    <text evidence="1">Belongs to the NAGSA dehydrogenase family. Type 1 subfamily.</text>
</comment>
<protein>
    <recommendedName>
        <fullName evidence="1">N-acetyl-gamma-glutamyl-phosphate reductase</fullName>
        <shortName evidence="1">AGPR</shortName>
        <ecNumber evidence="1">1.2.1.38</ecNumber>
    </recommendedName>
    <alternativeName>
        <fullName evidence="1">N-acetyl-glutamate semialdehyde dehydrogenase</fullName>
        <shortName evidence="1">NAGSA dehydrogenase</shortName>
    </alternativeName>
</protein>
<sequence length="334" mass="36384">MYSVSIIGASGYSGAELTRLLLRHPGVELQELYAFSQAGKAVSELYPLLSSDKVYKPYGGECESDVYFLALPHGEALQLVPPLVKAGKTVIDLSGDFRLKSTVEHEQFYKQQKSPEAVMTYGMSELFREEIIKAKAISNPGCFATSIILGVAPLLLGNDSSINVRGINCTSTSGISGAGRSSKTELSFSEMSENIRAYKVGLHQHIPEIMQTLGTSVTTPSFDFTFTPMIGSLVRGIYSILTVNLENPAEAEQIKALYKEFYKEAPFVRVRDTMTEVRHVAHTNFCDIHIAHATANGTLIIVTAIDNLLKGAAGQAIQNMNLMLGMNEKTGLSF</sequence>